<protein>
    <recommendedName>
        <fullName evidence="1">GTP cyclohydrolase-2</fullName>
        <ecNumber evidence="1">3.5.4.25</ecNumber>
    </recommendedName>
    <alternativeName>
        <fullName evidence="1">GTP cyclohydrolase II</fullName>
    </alternativeName>
</protein>
<accession>B2U0G9</accession>
<evidence type="ECO:0000255" key="1">
    <source>
        <dbReference type="HAMAP-Rule" id="MF_00179"/>
    </source>
</evidence>
<keyword id="KW-0342">GTP-binding</keyword>
<keyword id="KW-0378">Hydrolase</keyword>
<keyword id="KW-0479">Metal-binding</keyword>
<keyword id="KW-0547">Nucleotide-binding</keyword>
<keyword id="KW-1185">Reference proteome</keyword>
<keyword id="KW-0686">Riboflavin biosynthesis</keyword>
<keyword id="KW-0862">Zinc</keyword>
<proteinExistence type="inferred from homology"/>
<reference key="1">
    <citation type="submission" date="2008-05" db="EMBL/GenBank/DDBJ databases">
        <title>Complete sequence of Shigella boydii serotype 18 strain BS512.</title>
        <authorList>
            <person name="Rasko D.A."/>
            <person name="Rosovitz M."/>
            <person name="Maurelli A.T."/>
            <person name="Myers G."/>
            <person name="Seshadri R."/>
            <person name="Cer R."/>
            <person name="Jiang L."/>
            <person name="Ravel J."/>
            <person name="Sebastian Y."/>
        </authorList>
    </citation>
    <scope>NUCLEOTIDE SEQUENCE [LARGE SCALE GENOMIC DNA]</scope>
    <source>
        <strain>CDC 3083-94 / BS512</strain>
    </source>
</reference>
<comment type="function">
    <text evidence="1">Catalyzes the conversion of GTP to 2,5-diamino-6-ribosylamino-4(3H)-pyrimidinone 5'-phosphate (DARP), formate and pyrophosphate.</text>
</comment>
<comment type="catalytic activity">
    <reaction evidence="1">
        <text>GTP + 4 H2O = 2,5-diamino-6-hydroxy-4-(5-phosphoribosylamino)-pyrimidine + formate + 2 phosphate + 3 H(+)</text>
        <dbReference type="Rhea" id="RHEA:23704"/>
        <dbReference type="ChEBI" id="CHEBI:15377"/>
        <dbReference type="ChEBI" id="CHEBI:15378"/>
        <dbReference type="ChEBI" id="CHEBI:15740"/>
        <dbReference type="ChEBI" id="CHEBI:37565"/>
        <dbReference type="ChEBI" id="CHEBI:43474"/>
        <dbReference type="ChEBI" id="CHEBI:58614"/>
        <dbReference type="EC" id="3.5.4.25"/>
    </reaction>
</comment>
<comment type="cofactor">
    <cofactor evidence="1">
        <name>Zn(2+)</name>
        <dbReference type="ChEBI" id="CHEBI:29105"/>
    </cofactor>
    <text evidence="1">Binds 1 zinc ion per subunit.</text>
</comment>
<comment type="pathway">
    <text evidence="1">Cofactor biosynthesis; riboflavin biosynthesis; 5-amino-6-(D-ribitylamino)uracil from GTP: step 1/4.</text>
</comment>
<comment type="subunit">
    <text evidence="1">Homodimer.</text>
</comment>
<comment type="similarity">
    <text evidence="1">Belongs to the GTP cyclohydrolase II family.</text>
</comment>
<sequence>MQLKRVAEAKLPTPWGDFLMVGFEELATGHDHVALVYGDISEHTPVLARVHSECLTGDALFSLRCDCGFQLEAALTQIAEEGRGILLYHRQEGRNIGLLNKIRAYALQDQGYDTVEANHQLGFAADERDFTLCADMFKLLGVNEVRLLTNNPKKVEILTEAGINIVERVPLIVGRNPNNEHYLDTKAEKMGHLLNK</sequence>
<dbReference type="EC" id="3.5.4.25" evidence="1"/>
<dbReference type="EMBL" id="CP001063">
    <property type="protein sequence ID" value="ACD09157.1"/>
    <property type="molecule type" value="Genomic_DNA"/>
</dbReference>
<dbReference type="RefSeq" id="WP_001176288.1">
    <property type="nucleotide sequence ID" value="NC_010658.1"/>
</dbReference>
<dbReference type="SMR" id="B2U0G9"/>
<dbReference type="STRING" id="344609.SbBS512_E1505"/>
<dbReference type="KEGG" id="sbc:SbBS512_E1505"/>
<dbReference type="HOGENOM" id="CLU_020273_2_1_6"/>
<dbReference type="UniPathway" id="UPA00275">
    <property type="reaction ID" value="UER00400"/>
</dbReference>
<dbReference type="Proteomes" id="UP000001030">
    <property type="component" value="Chromosome"/>
</dbReference>
<dbReference type="GO" id="GO:0005829">
    <property type="term" value="C:cytosol"/>
    <property type="evidence" value="ECO:0007669"/>
    <property type="project" value="TreeGrafter"/>
</dbReference>
<dbReference type="GO" id="GO:0005525">
    <property type="term" value="F:GTP binding"/>
    <property type="evidence" value="ECO:0007669"/>
    <property type="project" value="UniProtKB-KW"/>
</dbReference>
<dbReference type="GO" id="GO:0003935">
    <property type="term" value="F:GTP cyclohydrolase II activity"/>
    <property type="evidence" value="ECO:0007669"/>
    <property type="project" value="UniProtKB-UniRule"/>
</dbReference>
<dbReference type="GO" id="GO:0008270">
    <property type="term" value="F:zinc ion binding"/>
    <property type="evidence" value="ECO:0007669"/>
    <property type="project" value="UniProtKB-UniRule"/>
</dbReference>
<dbReference type="GO" id="GO:0009231">
    <property type="term" value="P:riboflavin biosynthetic process"/>
    <property type="evidence" value="ECO:0007669"/>
    <property type="project" value="UniProtKB-UniRule"/>
</dbReference>
<dbReference type="CDD" id="cd00641">
    <property type="entry name" value="GTP_cyclohydro2"/>
    <property type="match status" value="1"/>
</dbReference>
<dbReference type="FunFam" id="3.40.50.10990:FF:000002">
    <property type="entry name" value="GTP cyclohydrolase-2"/>
    <property type="match status" value="1"/>
</dbReference>
<dbReference type="Gene3D" id="3.40.50.10990">
    <property type="entry name" value="GTP cyclohydrolase II"/>
    <property type="match status" value="1"/>
</dbReference>
<dbReference type="HAMAP" id="MF_00179">
    <property type="entry name" value="RibA"/>
    <property type="match status" value="1"/>
</dbReference>
<dbReference type="InterPro" id="IPR032677">
    <property type="entry name" value="GTP_cyclohydro_II"/>
</dbReference>
<dbReference type="InterPro" id="IPR000926">
    <property type="entry name" value="RibA"/>
</dbReference>
<dbReference type="InterPro" id="IPR036144">
    <property type="entry name" value="RibA-like_sf"/>
</dbReference>
<dbReference type="NCBIfam" id="NF001591">
    <property type="entry name" value="PRK00393.1"/>
    <property type="match status" value="1"/>
</dbReference>
<dbReference type="NCBIfam" id="TIGR00505">
    <property type="entry name" value="ribA"/>
    <property type="match status" value="1"/>
</dbReference>
<dbReference type="PANTHER" id="PTHR21327:SF18">
    <property type="entry name" value="3,4-DIHYDROXY-2-BUTANONE 4-PHOSPHATE SYNTHASE"/>
    <property type="match status" value="1"/>
</dbReference>
<dbReference type="PANTHER" id="PTHR21327">
    <property type="entry name" value="GTP CYCLOHYDROLASE II-RELATED"/>
    <property type="match status" value="1"/>
</dbReference>
<dbReference type="Pfam" id="PF00925">
    <property type="entry name" value="GTP_cyclohydro2"/>
    <property type="match status" value="1"/>
</dbReference>
<dbReference type="SUPFAM" id="SSF142695">
    <property type="entry name" value="RibA-like"/>
    <property type="match status" value="1"/>
</dbReference>
<name>RIBA_SHIB3</name>
<organism>
    <name type="scientific">Shigella boydii serotype 18 (strain CDC 3083-94 / BS512)</name>
    <dbReference type="NCBI Taxonomy" id="344609"/>
    <lineage>
        <taxon>Bacteria</taxon>
        <taxon>Pseudomonadati</taxon>
        <taxon>Pseudomonadota</taxon>
        <taxon>Gammaproteobacteria</taxon>
        <taxon>Enterobacterales</taxon>
        <taxon>Enterobacteriaceae</taxon>
        <taxon>Shigella</taxon>
    </lineage>
</organism>
<feature type="chain" id="PRO_1000098273" description="GTP cyclohydrolase-2">
    <location>
        <begin position="1"/>
        <end position="196"/>
    </location>
</feature>
<feature type="active site" description="Proton acceptor" evidence="1">
    <location>
        <position position="126"/>
    </location>
</feature>
<feature type="active site" description="Nucleophile" evidence="1">
    <location>
        <position position="128"/>
    </location>
</feature>
<feature type="binding site" evidence="1">
    <location>
        <begin position="49"/>
        <end position="53"/>
    </location>
    <ligand>
        <name>GTP</name>
        <dbReference type="ChEBI" id="CHEBI:37565"/>
    </ligand>
</feature>
<feature type="binding site" evidence="1">
    <location>
        <position position="54"/>
    </location>
    <ligand>
        <name>Zn(2+)</name>
        <dbReference type="ChEBI" id="CHEBI:29105"/>
        <note>catalytic</note>
    </ligand>
</feature>
<feature type="binding site" evidence="1">
    <location>
        <position position="65"/>
    </location>
    <ligand>
        <name>Zn(2+)</name>
        <dbReference type="ChEBI" id="CHEBI:29105"/>
        <note>catalytic</note>
    </ligand>
</feature>
<feature type="binding site" evidence="1">
    <location>
        <position position="67"/>
    </location>
    <ligand>
        <name>Zn(2+)</name>
        <dbReference type="ChEBI" id="CHEBI:29105"/>
        <note>catalytic</note>
    </ligand>
</feature>
<feature type="binding site" evidence="1">
    <location>
        <position position="70"/>
    </location>
    <ligand>
        <name>GTP</name>
        <dbReference type="ChEBI" id="CHEBI:37565"/>
    </ligand>
</feature>
<feature type="binding site" evidence="1">
    <location>
        <begin position="92"/>
        <end position="94"/>
    </location>
    <ligand>
        <name>GTP</name>
        <dbReference type="ChEBI" id="CHEBI:37565"/>
    </ligand>
</feature>
<feature type="binding site" evidence="1">
    <location>
        <position position="114"/>
    </location>
    <ligand>
        <name>GTP</name>
        <dbReference type="ChEBI" id="CHEBI:37565"/>
    </ligand>
</feature>
<feature type="binding site" evidence="1">
    <location>
        <position position="149"/>
    </location>
    <ligand>
        <name>GTP</name>
        <dbReference type="ChEBI" id="CHEBI:37565"/>
    </ligand>
</feature>
<feature type="binding site" evidence="1">
    <location>
        <position position="154"/>
    </location>
    <ligand>
        <name>GTP</name>
        <dbReference type="ChEBI" id="CHEBI:37565"/>
    </ligand>
</feature>
<gene>
    <name evidence="1" type="primary">ribA</name>
    <name type="ordered locus">SbBS512_E1505</name>
</gene>